<dbReference type="EC" id="2.7.2.3" evidence="1"/>
<dbReference type="EMBL" id="CP000446">
    <property type="protein sequence ID" value="ABI37855.1"/>
    <property type="molecule type" value="Genomic_DNA"/>
</dbReference>
<dbReference type="RefSeq" id="WP_011621570.1">
    <property type="nucleotide sequence ID" value="NC_008321.1"/>
</dbReference>
<dbReference type="SMR" id="Q0HM62"/>
<dbReference type="KEGG" id="she:Shewmr4_0775"/>
<dbReference type="HOGENOM" id="CLU_025427_0_2_6"/>
<dbReference type="UniPathway" id="UPA00109">
    <property type="reaction ID" value="UER00185"/>
</dbReference>
<dbReference type="GO" id="GO:0005829">
    <property type="term" value="C:cytosol"/>
    <property type="evidence" value="ECO:0007669"/>
    <property type="project" value="TreeGrafter"/>
</dbReference>
<dbReference type="GO" id="GO:0043531">
    <property type="term" value="F:ADP binding"/>
    <property type="evidence" value="ECO:0007669"/>
    <property type="project" value="TreeGrafter"/>
</dbReference>
<dbReference type="GO" id="GO:0005524">
    <property type="term" value="F:ATP binding"/>
    <property type="evidence" value="ECO:0007669"/>
    <property type="project" value="UniProtKB-KW"/>
</dbReference>
<dbReference type="GO" id="GO:0004618">
    <property type="term" value="F:phosphoglycerate kinase activity"/>
    <property type="evidence" value="ECO:0007669"/>
    <property type="project" value="UniProtKB-UniRule"/>
</dbReference>
<dbReference type="GO" id="GO:0006094">
    <property type="term" value="P:gluconeogenesis"/>
    <property type="evidence" value="ECO:0007669"/>
    <property type="project" value="TreeGrafter"/>
</dbReference>
<dbReference type="GO" id="GO:0006096">
    <property type="term" value="P:glycolytic process"/>
    <property type="evidence" value="ECO:0007669"/>
    <property type="project" value="UniProtKB-UniRule"/>
</dbReference>
<dbReference type="FunFam" id="3.40.50.1260:FF:000001">
    <property type="entry name" value="Phosphoglycerate kinase"/>
    <property type="match status" value="1"/>
</dbReference>
<dbReference type="FunFam" id="3.40.50.1260:FF:000002">
    <property type="entry name" value="Phosphoglycerate kinase"/>
    <property type="match status" value="1"/>
</dbReference>
<dbReference type="Gene3D" id="3.40.50.1260">
    <property type="entry name" value="Phosphoglycerate kinase, N-terminal domain"/>
    <property type="match status" value="2"/>
</dbReference>
<dbReference type="HAMAP" id="MF_00145">
    <property type="entry name" value="Phosphoglyc_kinase"/>
    <property type="match status" value="1"/>
</dbReference>
<dbReference type="InterPro" id="IPR001576">
    <property type="entry name" value="Phosphoglycerate_kinase"/>
</dbReference>
<dbReference type="InterPro" id="IPR015911">
    <property type="entry name" value="Phosphoglycerate_kinase_CS"/>
</dbReference>
<dbReference type="InterPro" id="IPR015824">
    <property type="entry name" value="Phosphoglycerate_kinase_N"/>
</dbReference>
<dbReference type="InterPro" id="IPR036043">
    <property type="entry name" value="Phosphoglycerate_kinase_sf"/>
</dbReference>
<dbReference type="PANTHER" id="PTHR11406">
    <property type="entry name" value="PHOSPHOGLYCERATE KINASE"/>
    <property type="match status" value="1"/>
</dbReference>
<dbReference type="PANTHER" id="PTHR11406:SF23">
    <property type="entry name" value="PHOSPHOGLYCERATE KINASE 1, CHLOROPLASTIC-RELATED"/>
    <property type="match status" value="1"/>
</dbReference>
<dbReference type="Pfam" id="PF00162">
    <property type="entry name" value="PGK"/>
    <property type="match status" value="1"/>
</dbReference>
<dbReference type="PIRSF" id="PIRSF000724">
    <property type="entry name" value="Pgk"/>
    <property type="match status" value="1"/>
</dbReference>
<dbReference type="PRINTS" id="PR00477">
    <property type="entry name" value="PHGLYCKINASE"/>
</dbReference>
<dbReference type="SUPFAM" id="SSF53748">
    <property type="entry name" value="Phosphoglycerate kinase"/>
    <property type="match status" value="1"/>
</dbReference>
<dbReference type="PROSITE" id="PS00111">
    <property type="entry name" value="PGLYCERATE_KINASE"/>
    <property type="match status" value="1"/>
</dbReference>
<name>PGK_SHESM</name>
<proteinExistence type="inferred from homology"/>
<accession>Q0HM62</accession>
<evidence type="ECO:0000255" key="1">
    <source>
        <dbReference type="HAMAP-Rule" id="MF_00145"/>
    </source>
</evidence>
<gene>
    <name evidence="1" type="primary">pgk</name>
    <name type="ordered locus">Shewmr4_0775</name>
</gene>
<sequence>MAIINMSDLDLQGKRVLIREDLNVPVSNGVVTSDARLRASLPTIELALAKGAAVMVMSHLGRPTEGEYNSEFSMQPVVDYLAKALSCTVRLATDYLDGVEVAVGEVVVFENVRFNKGEKKNDEALSKKMAALCDVYVMDAFGTAHRAEASTNGVGLHAPIACAGPLLAQELEALGKALDNPARPLVAIVGGSKVSTKLTVLESLSGIVDQLVVGGGIANTFIAAAGHNVGKSLYEADLIDEAKRLVANAQSRGGDIPVPTDVVVAGEFSPTAAATLKAVNEVADSDMIFDIGPDSAEALAKIIESAGTIVWNGPVGVFEFDQFGEGTKRIAQAIADSKAFSIAGGGDTLAAVDKYDIADKVSYISTGGGAFLEFLEGKELPAVAMLKQRGA</sequence>
<feature type="chain" id="PRO_1000058061" description="Phosphoglycerate kinase">
    <location>
        <begin position="1"/>
        <end position="391"/>
    </location>
</feature>
<feature type="binding site" evidence="1">
    <location>
        <begin position="21"/>
        <end position="23"/>
    </location>
    <ligand>
        <name>substrate</name>
    </ligand>
</feature>
<feature type="binding site" evidence="1">
    <location>
        <position position="36"/>
    </location>
    <ligand>
        <name>substrate</name>
    </ligand>
</feature>
<feature type="binding site" evidence="1">
    <location>
        <begin position="59"/>
        <end position="62"/>
    </location>
    <ligand>
        <name>substrate</name>
    </ligand>
</feature>
<feature type="binding site" evidence="1">
    <location>
        <position position="113"/>
    </location>
    <ligand>
        <name>substrate</name>
    </ligand>
</feature>
<feature type="binding site" evidence="1">
    <location>
        <position position="146"/>
    </location>
    <ligand>
        <name>substrate</name>
    </ligand>
</feature>
<feature type="binding site" evidence="1">
    <location>
        <position position="197"/>
    </location>
    <ligand>
        <name>ATP</name>
        <dbReference type="ChEBI" id="CHEBI:30616"/>
    </ligand>
</feature>
<feature type="binding site" evidence="1">
    <location>
        <position position="319"/>
    </location>
    <ligand>
        <name>ATP</name>
        <dbReference type="ChEBI" id="CHEBI:30616"/>
    </ligand>
</feature>
<feature type="binding site" evidence="1">
    <location>
        <begin position="345"/>
        <end position="348"/>
    </location>
    <ligand>
        <name>ATP</name>
        <dbReference type="ChEBI" id="CHEBI:30616"/>
    </ligand>
</feature>
<reference key="1">
    <citation type="submission" date="2006-08" db="EMBL/GenBank/DDBJ databases">
        <title>Complete sequence of Shewanella sp. MR-4.</title>
        <authorList>
            <consortium name="US DOE Joint Genome Institute"/>
            <person name="Copeland A."/>
            <person name="Lucas S."/>
            <person name="Lapidus A."/>
            <person name="Barry K."/>
            <person name="Detter J.C."/>
            <person name="Glavina del Rio T."/>
            <person name="Hammon N."/>
            <person name="Israni S."/>
            <person name="Dalin E."/>
            <person name="Tice H."/>
            <person name="Pitluck S."/>
            <person name="Kiss H."/>
            <person name="Brettin T."/>
            <person name="Bruce D."/>
            <person name="Han C."/>
            <person name="Tapia R."/>
            <person name="Gilna P."/>
            <person name="Schmutz J."/>
            <person name="Larimer F."/>
            <person name="Land M."/>
            <person name="Hauser L."/>
            <person name="Kyrpides N."/>
            <person name="Mikhailova N."/>
            <person name="Nealson K."/>
            <person name="Konstantinidis K."/>
            <person name="Klappenbach J."/>
            <person name="Tiedje J."/>
            <person name="Richardson P."/>
        </authorList>
    </citation>
    <scope>NUCLEOTIDE SEQUENCE [LARGE SCALE GENOMIC DNA]</scope>
    <source>
        <strain>MR-4</strain>
    </source>
</reference>
<organism>
    <name type="scientific">Shewanella sp. (strain MR-4)</name>
    <dbReference type="NCBI Taxonomy" id="60480"/>
    <lineage>
        <taxon>Bacteria</taxon>
        <taxon>Pseudomonadati</taxon>
        <taxon>Pseudomonadota</taxon>
        <taxon>Gammaproteobacteria</taxon>
        <taxon>Alteromonadales</taxon>
        <taxon>Shewanellaceae</taxon>
        <taxon>Shewanella</taxon>
    </lineage>
</organism>
<comment type="catalytic activity">
    <reaction evidence="1">
        <text>(2R)-3-phosphoglycerate + ATP = (2R)-3-phospho-glyceroyl phosphate + ADP</text>
        <dbReference type="Rhea" id="RHEA:14801"/>
        <dbReference type="ChEBI" id="CHEBI:30616"/>
        <dbReference type="ChEBI" id="CHEBI:57604"/>
        <dbReference type="ChEBI" id="CHEBI:58272"/>
        <dbReference type="ChEBI" id="CHEBI:456216"/>
        <dbReference type="EC" id="2.7.2.3"/>
    </reaction>
</comment>
<comment type="pathway">
    <text evidence="1">Carbohydrate degradation; glycolysis; pyruvate from D-glyceraldehyde 3-phosphate: step 2/5.</text>
</comment>
<comment type="subunit">
    <text evidence="1">Monomer.</text>
</comment>
<comment type="subcellular location">
    <subcellularLocation>
        <location evidence="1">Cytoplasm</location>
    </subcellularLocation>
</comment>
<comment type="similarity">
    <text evidence="1">Belongs to the phosphoglycerate kinase family.</text>
</comment>
<keyword id="KW-0067">ATP-binding</keyword>
<keyword id="KW-0963">Cytoplasm</keyword>
<keyword id="KW-0324">Glycolysis</keyword>
<keyword id="KW-0418">Kinase</keyword>
<keyword id="KW-0547">Nucleotide-binding</keyword>
<keyword id="KW-0808">Transferase</keyword>
<protein>
    <recommendedName>
        <fullName evidence="1">Phosphoglycerate kinase</fullName>
        <ecNumber evidence="1">2.7.2.3</ecNumber>
    </recommendedName>
</protein>